<organism>
    <name type="scientific">Vespa affinis</name>
    <name type="common">Lesser banded hornet</name>
    <dbReference type="NCBI Taxonomy" id="882735"/>
    <lineage>
        <taxon>Eukaryota</taxon>
        <taxon>Metazoa</taxon>
        <taxon>Ecdysozoa</taxon>
        <taxon>Arthropoda</taxon>
        <taxon>Hexapoda</taxon>
        <taxon>Insecta</taxon>
        <taxon>Pterygota</taxon>
        <taxon>Neoptera</taxon>
        <taxon>Endopterygota</taxon>
        <taxon>Hymenoptera</taxon>
        <taxon>Apocrita</taxon>
        <taxon>Aculeata</taxon>
        <taxon>Vespoidea</taxon>
        <taxon>Vespidae</taxon>
        <taxon>Vespinae</taxon>
        <taxon>Vespa</taxon>
    </lineage>
</organism>
<evidence type="ECO:0000250" key="1">
    <source>
        <dbReference type="UniProtKB" id="P01514"/>
    </source>
</evidence>
<evidence type="ECO:0000250" key="2">
    <source>
        <dbReference type="UniProtKB" id="P84914"/>
    </source>
</evidence>
<evidence type="ECO:0000255" key="3"/>
<evidence type="ECO:0000269" key="4">
    <source>
    </source>
</evidence>
<evidence type="ECO:0000269" key="5">
    <source>
    </source>
</evidence>
<evidence type="ECO:0000303" key="6">
    <source>
    </source>
</evidence>
<evidence type="ECO:0000303" key="7">
    <source>
    </source>
</evidence>
<evidence type="ECO:0000305" key="8"/>
<evidence type="ECO:0000305" key="9">
    <source>
    </source>
</evidence>
<evidence type="ECO:0000312" key="10">
    <source>
        <dbReference type="EMBL" id="ADN92459.1"/>
    </source>
</evidence>
<feature type="signal peptide" evidence="3">
    <location>
        <begin position="1"/>
        <end position="25"/>
    </location>
</feature>
<feature type="propeptide" id="PRO_0000458813" evidence="8">
    <location>
        <begin position="26"/>
        <end position="47"/>
    </location>
</feature>
<feature type="peptide" id="PRO_0000458814" description="Mastoparan-AF" evidence="4">
    <location>
        <begin position="48"/>
        <end position="61"/>
    </location>
</feature>
<feature type="repeat" description="AXPX 1" evidence="8">
    <location>
        <begin position="25"/>
        <end position="28"/>
    </location>
</feature>
<feature type="repeat" description="AXPX 2" evidence="8">
    <location>
        <begin position="29"/>
        <end position="32"/>
    </location>
</feature>
<feature type="repeat" description="AXPX 3" evidence="8">
    <location>
        <begin position="33"/>
        <end position="36"/>
    </location>
</feature>
<feature type="repeat" description="AXPX 4" evidence="8">
    <location>
        <begin position="43"/>
        <end position="46"/>
    </location>
</feature>
<feature type="modified residue" description="Phenylalanine amide" evidence="9">
    <location>
        <position position="61"/>
    </location>
</feature>
<comment type="function">
    <text evidence="1 2 4 5">Antimicrobial and mast cell degranulating peptide (PubMed:21884742). Has broad spectrum antibacterial activity against both Gram-positive and Gram-negative bacteria (S.aureus MIC=16-32 ug/ml, S.xylosus MIC=1.5 ug/ml, S.alactolyticus MIC=8 ug/ml, C.koseri MIC=4 ug/ml, E.coli MIC=4-32 ug/ml, K.pneumoniae MIC=32 ug/ml, P.aerugiosa MIC=96 ug/ml, S.choleraesuis MIC=16 ug/ml, S.typhimurium MIC=32 ug/ml, V.parahamelytics MIC=16 ug/ml) (PubMed:21884742, PubMed:36837754). Is also active on multi-antibiotic resistant hemolytic E.coli O157:H7 (PubMed:36837754). Acts by affecting membrane permeability (PubMed:21884742, PubMed:36837754). On E.coli O157:H7, acts through multiple membrane disruption patterns, including large perforations (full opening) at apical ends (hollow tubes), vesicle budding, forming dents, and membrane corrugation and invagination leading to irregular pits or pores (PubMed:36837754). Exerts 40% lower membrane permeabilization activities on E.coli O157:H7 than on the non-pathogen E.coli BL21 (PubMed:21884742, PubMed:36837754). Shows little hemolytic activities on sheep, chicken and human erythrocytes, but with a higher activity on chicken erythrocytes (PubMed:21884742, PubMed:36837754). Its mast cell degranulation activity may be related to the activation of G-protein coupled receptors in mast cells as well as interaction with other proteins located in cell endosomal membranes in the mast cells (By similarity).</text>
</comment>
<comment type="subcellular location">
    <subcellularLocation>
        <location evidence="9">Secreted</location>
    </subcellularLocation>
    <subcellularLocation>
        <location evidence="8">Target cell membrane</location>
    </subcellularLocation>
    <text evidence="5 9">Assumes an amphipathic alpha-helical conformation in a membrane-like environment (Probable). May favorably adopt 3-11 helices to facilitate membrane interaction (PubMed:36837754).</text>
</comment>
<comment type="tissue specificity">
    <text evidence="9">Expressed by the venom gland.</text>
</comment>
<comment type="similarity">
    <text evidence="8">Belongs to the MCD family. Mastoparan subfamily.</text>
</comment>
<dbReference type="EMBL" id="HQ156227">
    <property type="protein sequence ID" value="ADN92459.1"/>
    <property type="molecule type" value="mRNA"/>
</dbReference>
<dbReference type="GO" id="GO:0005576">
    <property type="term" value="C:extracellular region"/>
    <property type="evidence" value="ECO:0007669"/>
    <property type="project" value="UniProtKB-SubCell"/>
</dbReference>
<dbReference type="GO" id="GO:0016020">
    <property type="term" value="C:membrane"/>
    <property type="evidence" value="ECO:0007669"/>
    <property type="project" value="UniProtKB-KW"/>
</dbReference>
<dbReference type="GO" id="GO:0044218">
    <property type="term" value="C:other organism cell membrane"/>
    <property type="evidence" value="ECO:0007669"/>
    <property type="project" value="UniProtKB-KW"/>
</dbReference>
<dbReference type="GO" id="GO:0090729">
    <property type="term" value="F:toxin activity"/>
    <property type="evidence" value="ECO:0007669"/>
    <property type="project" value="UniProtKB-KW"/>
</dbReference>
<dbReference type="GO" id="GO:0042742">
    <property type="term" value="P:defense response to bacterium"/>
    <property type="evidence" value="ECO:0007669"/>
    <property type="project" value="UniProtKB-KW"/>
</dbReference>
<dbReference type="GO" id="GO:0045087">
    <property type="term" value="P:innate immune response"/>
    <property type="evidence" value="ECO:0007669"/>
    <property type="project" value="UniProtKB-KW"/>
</dbReference>
<dbReference type="InterPro" id="IPR013213">
    <property type="entry name" value="Mastoparan"/>
</dbReference>
<dbReference type="Pfam" id="PF08249">
    <property type="entry name" value="Mastoparan"/>
    <property type="match status" value="1"/>
</dbReference>
<proteinExistence type="evidence at protein level"/>
<sequence length="62" mass="6431">MKNTILILFTAFIALLGFFGMSAEADPIADPIADPISGPNAEADPEAINLKAIAALAKKLFG</sequence>
<accession>S4S2C7</accession>
<keyword id="KW-0027">Amidation</keyword>
<keyword id="KW-0044">Antibiotic</keyword>
<keyword id="KW-0929">Antimicrobial</keyword>
<keyword id="KW-1213">G-protein coupled receptor impairing toxin</keyword>
<keyword id="KW-0391">Immunity</keyword>
<keyword id="KW-0399">Innate immunity</keyword>
<keyword id="KW-0467">Mast cell degranulation</keyword>
<keyword id="KW-0472">Membrane</keyword>
<keyword id="KW-0677">Repeat</keyword>
<keyword id="KW-0964">Secreted</keyword>
<keyword id="KW-0732">Signal</keyword>
<keyword id="KW-1052">Target cell membrane</keyword>
<keyword id="KW-1053">Target membrane</keyword>
<keyword id="KW-0800">Toxin</keyword>
<reference evidence="10" key="1">
    <citation type="journal article" date="2011" name="Peptides">
        <title>Structural and biological characterization of mastoparans in the venom of Vespa species in Taiwan.</title>
        <authorList>
            <person name="Lin C.H."/>
            <person name="Tzen J.T."/>
            <person name="Shyu C.L."/>
            <person name="Yang M.J."/>
            <person name="Tu W.C."/>
        </authorList>
    </citation>
    <scope>NUCLEOTIDE SEQUENCE [MRNA]</scope>
    <scope>FUNCTION</scope>
    <scope>PROBABLE AMIDATION AT PHE-61</scope>
    <scope>SYNTHESIS OF 48-61</scope>
    <source>
        <tissue>Venom gland</tissue>
    </source>
</reference>
<reference key="2">
    <citation type="journal article" date="2023" name="Membranes">
        <title>Antimicrobial peptide mastoparan-AF kills multi-antibiotic resistant Escherichia coli O157:H7 via multiple membrane disruption patterns and likely by adopting 3-11 amphipathic helices to favor membrane interaction.</title>
        <authorList>
            <person name="Lin C.H."/>
            <person name="Shyu C.L."/>
            <person name="Wu Z.Y."/>
            <person name="Wang C.M."/>
            <person name="Chiou S.H."/>
            <person name="Chen J.Y."/>
            <person name="Tseng S.Y."/>
            <person name="Lin T.E."/>
            <person name="Yuan Y.P."/>
            <person name="Ho S.P."/>
            <person name="Tung K.C."/>
            <person name="Mao F.C."/>
            <person name="Lee H.J."/>
            <person name="Tu W.C."/>
        </authorList>
    </citation>
    <scope>NUCLEOTIDE SEQUENCE [MRNA]</scope>
    <scope>FUNCTION</scope>
    <scope>SYNTHESIS OF 48-61</scope>
    <scope>PROBABLE AMIDATION AT PHE-61</scope>
    <scope>SUBCELLULAR LOCATION</scope>
</reference>
<name>MAST_VESAF</name>
<protein>
    <recommendedName>
        <fullName evidence="6 7">Mastoparan-AF</fullName>
        <shortName evidence="6">MP-AF</shortName>
    </recommendedName>
</protein>